<organism>
    <name type="scientific">Mycobacterium leprae (strain Br4923)</name>
    <dbReference type="NCBI Taxonomy" id="561304"/>
    <lineage>
        <taxon>Bacteria</taxon>
        <taxon>Bacillati</taxon>
        <taxon>Actinomycetota</taxon>
        <taxon>Actinomycetes</taxon>
        <taxon>Mycobacteriales</taxon>
        <taxon>Mycobacteriaceae</taxon>
        <taxon>Mycobacterium</taxon>
    </lineage>
</organism>
<gene>
    <name evidence="1" type="primary">rbfA</name>
    <name type="ordered locus">MLBr01555</name>
</gene>
<comment type="function">
    <text evidence="1">One of several proteins that assist in the late maturation steps of the functional core of the 30S ribosomal subunit. Associates with free 30S ribosomal subunits (but not with 30S subunits that are part of 70S ribosomes or polysomes). Required for efficient processing of 16S rRNA. May interact with the 5'-terminal helix region of 16S rRNA.</text>
</comment>
<comment type="subunit">
    <text evidence="1">Monomer. Binds 30S ribosomal subunits, but not 50S ribosomal subunits or 70S ribosomes.</text>
</comment>
<comment type="subcellular location">
    <subcellularLocation>
        <location evidence="1">Cytoplasm</location>
    </subcellularLocation>
</comment>
<comment type="similarity">
    <text evidence="1">Belongs to the RbfA family.</text>
</comment>
<sequence length="164" mass="17483">MADQARARRLAKRICTIVASAIEFEIKDPGLDGVTIVDVKVTADLHDATVFYTVMGRTLEDAPDYTAATAALNRAKGTLRSKVGAGTGVRFTPTLTFIRDTTSDSVARMEELLARARAADADVAQVRLRAKPAGEADPYRDKGSVAGLVGVDIADIDDDDLTDD</sequence>
<name>RBFA_MYCLB</name>
<reference key="1">
    <citation type="journal article" date="2009" name="Nat. Genet.">
        <title>Comparative genomic and phylogeographic analysis of Mycobacterium leprae.</title>
        <authorList>
            <person name="Monot M."/>
            <person name="Honore N."/>
            <person name="Garnier T."/>
            <person name="Zidane N."/>
            <person name="Sherafi D."/>
            <person name="Paniz-Mondolfi A."/>
            <person name="Matsuoka M."/>
            <person name="Taylor G.M."/>
            <person name="Donoghue H.D."/>
            <person name="Bouwman A."/>
            <person name="Mays S."/>
            <person name="Watson C."/>
            <person name="Lockwood D."/>
            <person name="Khamispour A."/>
            <person name="Dowlati Y."/>
            <person name="Jianping S."/>
            <person name="Rea T.H."/>
            <person name="Vera-Cabrera L."/>
            <person name="Stefani M.M."/>
            <person name="Banu S."/>
            <person name="Macdonald M."/>
            <person name="Sapkota B.R."/>
            <person name="Spencer J.S."/>
            <person name="Thomas J."/>
            <person name="Harshman K."/>
            <person name="Singh P."/>
            <person name="Busso P."/>
            <person name="Gattiker A."/>
            <person name="Rougemont J."/>
            <person name="Brennan P.J."/>
            <person name="Cole S.T."/>
        </authorList>
    </citation>
    <scope>NUCLEOTIDE SEQUENCE [LARGE SCALE GENOMIC DNA]</scope>
    <source>
        <strain>Br4923</strain>
    </source>
</reference>
<evidence type="ECO:0000255" key="1">
    <source>
        <dbReference type="HAMAP-Rule" id="MF_00003"/>
    </source>
</evidence>
<protein>
    <recommendedName>
        <fullName evidence="1">Ribosome-binding factor A</fullName>
    </recommendedName>
</protein>
<dbReference type="EMBL" id="FM211192">
    <property type="protein sequence ID" value="CAR71650.1"/>
    <property type="molecule type" value="Genomic_DNA"/>
</dbReference>
<dbReference type="SMR" id="B8ZRT3"/>
<dbReference type="KEGG" id="mlb:MLBr01555"/>
<dbReference type="HOGENOM" id="CLU_089475_0_0_11"/>
<dbReference type="Proteomes" id="UP000006900">
    <property type="component" value="Chromosome"/>
</dbReference>
<dbReference type="GO" id="GO:0005829">
    <property type="term" value="C:cytosol"/>
    <property type="evidence" value="ECO:0007669"/>
    <property type="project" value="TreeGrafter"/>
</dbReference>
<dbReference type="GO" id="GO:0043024">
    <property type="term" value="F:ribosomal small subunit binding"/>
    <property type="evidence" value="ECO:0007669"/>
    <property type="project" value="TreeGrafter"/>
</dbReference>
<dbReference type="GO" id="GO:0030490">
    <property type="term" value="P:maturation of SSU-rRNA"/>
    <property type="evidence" value="ECO:0007669"/>
    <property type="project" value="UniProtKB-UniRule"/>
</dbReference>
<dbReference type="Gene3D" id="3.30.300.20">
    <property type="match status" value="1"/>
</dbReference>
<dbReference type="HAMAP" id="MF_00003">
    <property type="entry name" value="RbfA"/>
    <property type="match status" value="1"/>
</dbReference>
<dbReference type="InterPro" id="IPR015946">
    <property type="entry name" value="KH_dom-like_a/b"/>
</dbReference>
<dbReference type="InterPro" id="IPR000238">
    <property type="entry name" value="RbfA"/>
</dbReference>
<dbReference type="InterPro" id="IPR023799">
    <property type="entry name" value="RbfA_dom_sf"/>
</dbReference>
<dbReference type="InterPro" id="IPR020053">
    <property type="entry name" value="Ribosome-bd_factorA_CS"/>
</dbReference>
<dbReference type="NCBIfam" id="TIGR00082">
    <property type="entry name" value="rbfA"/>
    <property type="match status" value="1"/>
</dbReference>
<dbReference type="PANTHER" id="PTHR33515">
    <property type="entry name" value="RIBOSOME-BINDING FACTOR A, CHLOROPLASTIC-RELATED"/>
    <property type="match status" value="1"/>
</dbReference>
<dbReference type="PANTHER" id="PTHR33515:SF1">
    <property type="entry name" value="RIBOSOME-BINDING FACTOR A, CHLOROPLASTIC-RELATED"/>
    <property type="match status" value="1"/>
</dbReference>
<dbReference type="Pfam" id="PF02033">
    <property type="entry name" value="RBFA"/>
    <property type="match status" value="1"/>
</dbReference>
<dbReference type="SUPFAM" id="SSF89919">
    <property type="entry name" value="Ribosome-binding factor A, RbfA"/>
    <property type="match status" value="1"/>
</dbReference>
<dbReference type="PROSITE" id="PS01319">
    <property type="entry name" value="RBFA"/>
    <property type="match status" value="1"/>
</dbReference>
<accession>B8ZRT3</accession>
<proteinExistence type="inferred from homology"/>
<feature type="chain" id="PRO_1000193268" description="Ribosome-binding factor A">
    <location>
        <begin position="1"/>
        <end position="164"/>
    </location>
</feature>
<keyword id="KW-0963">Cytoplasm</keyword>
<keyword id="KW-0690">Ribosome biogenesis</keyword>